<reference key="1">
    <citation type="journal article" date="2000" name="J. Virol.">
        <title>The genome of fowlpox virus.</title>
        <authorList>
            <person name="Afonso C.L."/>
            <person name="Tulman E.R."/>
            <person name="Lu Z."/>
            <person name="Zsak L."/>
            <person name="Kutish G.F."/>
            <person name="Rock D.L."/>
        </authorList>
    </citation>
    <scope>NUCLEOTIDE SEQUENCE [LARGE SCALE GENOMIC DNA]</scope>
</reference>
<protein>
    <recommendedName>
        <fullName>DNA-directed RNA polymerase 7 kDa subunit</fullName>
        <ecNumber>2.7.7.6</ecNumber>
    </recommendedName>
</protein>
<sequence length="63" mass="7351">MVFPLVCSTCGRDLSEARYRLLVEQMELKKVVITYSRKCCRLKLSTQIEPYRNLTVQPSLDIN</sequence>
<keyword id="KW-0240">DNA-directed RNA polymerase</keyword>
<keyword id="KW-0244">Early protein</keyword>
<keyword id="KW-0548">Nucleotidyltransferase</keyword>
<keyword id="KW-1185">Reference proteome</keyword>
<keyword id="KW-0804">Transcription</keyword>
<keyword id="KW-0808">Transferase</keyword>
<keyword id="KW-0946">Virion</keyword>
<dbReference type="EC" id="2.7.7.6"/>
<dbReference type="EMBL" id="AF198100">
    <property type="protein sequence ID" value="AAF44462.1"/>
    <property type="molecule type" value="Genomic_DNA"/>
</dbReference>
<dbReference type="RefSeq" id="NP_039081.1">
    <property type="nucleotide sequence ID" value="NC_002188.1"/>
</dbReference>
<dbReference type="SMR" id="Q9J5A4"/>
<dbReference type="GeneID" id="1486666"/>
<dbReference type="KEGG" id="vg:1486666"/>
<dbReference type="Proteomes" id="UP000008597">
    <property type="component" value="Segment"/>
</dbReference>
<dbReference type="GO" id="GO:0000428">
    <property type="term" value="C:DNA-directed RNA polymerase complex"/>
    <property type="evidence" value="ECO:0007669"/>
    <property type="project" value="UniProtKB-KW"/>
</dbReference>
<dbReference type="GO" id="GO:0044423">
    <property type="term" value="C:virion component"/>
    <property type="evidence" value="ECO:0007669"/>
    <property type="project" value="UniProtKB-KW"/>
</dbReference>
<dbReference type="GO" id="GO:0003677">
    <property type="term" value="F:DNA binding"/>
    <property type="evidence" value="ECO:0007669"/>
    <property type="project" value="InterPro"/>
</dbReference>
<dbReference type="GO" id="GO:0003899">
    <property type="term" value="F:DNA-directed RNA polymerase activity"/>
    <property type="evidence" value="ECO:0007669"/>
    <property type="project" value="UniProtKB-EC"/>
</dbReference>
<dbReference type="GO" id="GO:0006351">
    <property type="term" value="P:DNA-templated transcription"/>
    <property type="evidence" value="ECO:0007669"/>
    <property type="project" value="InterPro"/>
</dbReference>
<dbReference type="InterPro" id="IPR008448">
    <property type="entry name" value="RNA_pol_7kDa_chordopoxvir"/>
</dbReference>
<dbReference type="Pfam" id="PF05864">
    <property type="entry name" value="Chordopox_RPO7"/>
    <property type="match status" value="1"/>
</dbReference>
<accession>Q9J5A4</accession>
<organism>
    <name type="scientific">Fowlpox virus (strain NVSL)</name>
    <name type="common">FPV</name>
    <dbReference type="NCBI Taxonomy" id="928301"/>
    <lineage>
        <taxon>Viruses</taxon>
        <taxon>Varidnaviria</taxon>
        <taxon>Bamfordvirae</taxon>
        <taxon>Nucleocytoviricota</taxon>
        <taxon>Pokkesviricetes</taxon>
        <taxon>Chitovirales</taxon>
        <taxon>Poxviridae</taxon>
        <taxon>Chordopoxvirinae</taxon>
        <taxon>Avipoxvirus</taxon>
        <taxon>Fowlpox virus</taxon>
    </lineage>
</organism>
<gene>
    <name type="primary">RPO7</name>
    <name type="ordered locus">FPV118</name>
</gene>
<feature type="chain" id="PRO_0000099160" description="DNA-directed RNA polymerase 7 kDa subunit">
    <location>
        <begin position="1"/>
        <end position="63"/>
    </location>
</feature>
<name>RP07_FOWPN</name>
<organismHost>
    <name type="scientific">Vertebrata</name>
    <dbReference type="NCBI Taxonomy" id="7742"/>
</organismHost>
<comment type="function">
    <text evidence="1">Part of the DNA-dependent RNA polymerase which catalyzes the transcription of viral DNA into RNA using the four ribonucleoside triphosphates as substrates. Responsible for the transcription of early, intermediate and late genes. DNA-dependent RNA polymerase associates with the early transcription factor (ETF) thereby allowing the early genes transcription. Late transcription, and probably also intermediate transcription, require newly synthesized RNA polymerase (By similarity).</text>
</comment>
<comment type="catalytic activity">
    <reaction>
        <text>RNA(n) + a ribonucleoside 5'-triphosphate = RNA(n+1) + diphosphate</text>
        <dbReference type="Rhea" id="RHEA:21248"/>
        <dbReference type="Rhea" id="RHEA-COMP:14527"/>
        <dbReference type="Rhea" id="RHEA-COMP:17342"/>
        <dbReference type="ChEBI" id="CHEBI:33019"/>
        <dbReference type="ChEBI" id="CHEBI:61557"/>
        <dbReference type="ChEBI" id="CHEBI:140395"/>
        <dbReference type="EC" id="2.7.7.6"/>
    </reaction>
</comment>
<comment type="subunit">
    <text evidence="1">The DNA-dependent RNA polymerase used for intermediate and late genes expression consists of eight subunits 147 kDa, 133 kDa, 35 kDa, 30 kDa, 22 kDa, 19 kDa, 18 kDa and 7 kDa totalling more than 500 kDa in mass. The same holoenzyme, with the addition of the transcription-specificity factor RAP94, is used for early gene expression (By similarity).</text>
</comment>
<comment type="subcellular location">
    <subcellularLocation>
        <location evidence="2">Virion</location>
    </subcellularLocation>
    <text evidence="1">All the enzymes and other proteins required to synthesize early mRNAs are packaged within the virion core along with the DNA genome. This is necessary because viral early mRNAs are synthesized within minutes after virus entry into the cell and are extruded through pores in the core particle (By similarity).</text>
</comment>
<comment type="induction">
    <text>Expressed in the early phase of the viral replicative cycle.</text>
</comment>
<comment type="similarity">
    <text evidence="2">Belongs to the poxviridae DNA-directed RNA polymerase 7 kDa subunit family.</text>
</comment>
<evidence type="ECO:0000250" key="1"/>
<evidence type="ECO:0000305" key="2"/>
<proteinExistence type="evidence at transcript level"/>